<feature type="chain" id="PRO_1000054388" description="Type III pantothenate kinase">
    <location>
        <begin position="1"/>
        <end position="254"/>
    </location>
</feature>
<feature type="active site" description="Proton acceptor" evidence="1">
    <location>
        <position position="106"/>
    </location>
</feature>
<feature type="binding site" evidence="1">
    <location>
        <begin position="7"/>
        <end position="14"/>
    </location>
    <ligand>
        <name>ATP</name>
        <dbReference type="ChEBI" id="CHEBI:30616"/>
    </ligand>
</feature>
<feature type="binding site" evidence="1">
    <location>
        <position position="97"/>
    </location>
    <ligand>
        <name>substrate</name>
    </ligand>
</feature>
<feature type="binding site" evidence="1">
    <location>
        <begin position="104"/>
        <end position="107"/>
    </location>
    <ligand>
        <name>substrate</name>
    </ligand>
</feature>
<feature type="binding site" evidence="1">
    <location>
        <position position="134"/>
    </location>
    <ligand>
        <name>ATP</name>
        <dbReference type="ChEBI" id="CHEBI:30616"/>
    </ligand>
</feature>
<feature type="binding site" evidence="1">
    <location>
        <position position="184"/>
    </location>
    <ligand>
        <name>substrate</name>
    </ligand>
</feature>
<organism>
    <name type="scientific">Methylibium petroleiphilum (strain ATCC BAA-1232 / LMG 22953 / PM1)</name>
    <dbReference type="NCBI Taxonomy" id="420662"/>
    <lineage>
        <taxon>Bacteria</taxon>
        <taxon>Pseudomonadati</taxon>
        <taxon>Pseudomonadota</taxon>
        <taxon>Betaproteobacteria</taxon>
        <taxon>Burkholderiales</taxon>
        <taxon>Sphaerotilaceae</taxon>
        <taxon>Methylibium</taxon>
    </lineage>
</organism>
<comment type="function">
    <text evidence="1">Catalyzes the phosphorylation of pantothenate (Pan), the first step in CoA biosynthesis.</text>
</comment>
<comment type="catalytic activity">
    <reaction evidence="1">
        <text>(R)-pantothenate + ATP = (R)-4'-phosphopantothenate + ADP + H(+)</text>
        <dbReference type="Rhea" id="RHEA:16373"/>
        <dbReference type="ChEBI" id="CHEBI:10986"/>
        <dbReference type="ChEBI" id="CHEBI:15378"/>
        <dbReference type="ChEBI" id="CHEBI:29032"/>
        <dbReference type="ChEBI" id="CHEBI:30616"/>
        <dbReference type="ChEBI" id="CHEBI:456216"/>
        <dbReference type="EC" id="2.7.1.33"/>
    </reaction>
</comment>
<comment type="cofactor">
    <cofactor evidence="1">
        <name>NH4(+)</name>
        <dbReference type="ChEBI" id="CHEBI:28938"/>
    </cofactor>
    <cofactor evidence="1">
        <name>K(+)</name>
        <dbReference type="ChEBI" id="CHEBI:29103"/>
    </cofactor>
    <text evidence="1">A monovalent cation. Ammonium or potassium.</text>
</comment>
<comment type="pathway">
    <text evidence="1">Cofactor biosynthesis; coenzyme A biosynthesis; CoA from (R)-pantothenate: step 1/5.</text>
</comment>
<comment type="subunit">
    <text evidence="1">Homodimer.</text>
</comment>
<comment type="subcellular location">
    <subcellularLocation>
        <location evidence="1">Cytoplasm</location>
    </subcellularLocation>
</comment>
<comment type="similarity">
    <text evidence="1">Belongs to the type III pantothenate kinase family.</text>
</comment>
<evidence type="ECO:0000255" key="1">
    <source>
        <dbReference type="HAMAP-Rule" id="MF_01274"/>
    </source>
</evidence>
<proteinExistence type="inferred from homology"/>
<gene>
    <name evidence="1" type="primary">coaX</name>
    <name type="ordered locus">Mpe_A3391</name>
</gene>
<accession>A2SLA5</accession>
<reference key="1">
    <citation type="journal article" date="2007" name="J. Bacteriol.">
        <title>Whole-genome analysis of the methyl tert-butyl ether-degrading beta-proteobacterium Methylibium petroleiphilum PM1.</title>
        <authorList>
            <person name="Kane S.R."/>
            <person name="Chakicherla A.Y."/>
            <person name="Chain P.S.G."/>
            <person name="Schmidt R."/>
            <person name="Shin M.W."/>
            <person name="Legler T.C."/>
            <person name="Scow K.M."/>
            <person name="Larimer F.W."/>
            <person name="Lucas S.M."/>
            <person name="Richardson P.M."/>
            <person name="Hristova K.R."/>
        </authorList>
    </citation>
    <scope>NUCLEOTIDE SEQUENCE [LARGE SCALE GENOMIC DNA]</scope>
    <source>
        <strain>ATCC BAA-1232 / LMG 22953 / PM1</strain>
    </source>
</reference>
<keyword id="KW-0067">ATP-binding</keyword>
<keyword id="KW-0173">Coenzyme A biosynthesis</keyword>
<keyword id="KW-0963">Cytoplasm</keyword>
<keyword id="KW-0418">Kinase</keyword>
<keyword id="KW-0547">Nucleotide-binding</keyword>
<keyword id="KW-0630">Potassium</keyword>
<keyword id="KW-1185">Reference proteome</keyword>
<keyword id="KW-0808">Transferase</keyword>
<sequence length="254" mass="26886">MTLLAIDIGNTRLKWALYPSAVPGSEPVAHGARFLETIDQLGEAEWAGLAPPPRHVLGCCVASDSVRHRVEEQLELWDVAPRWVVPGAAEAGVTNGYDHPMRLGSDRWVALIGARARVLAAGARRPVLVVMAGTAVTVDALDADGRFLGGLILPGHGIMLRALEAGTAGLRVPTGEVREFPTNTSDALTSGGNFAIAGAIERMHRHLQQRCGEPPLCIVTGGAGWKVVPALTIDHELIDTLIFDGLLTIAAQRG</sequence>
<name>COAX_METPP</name>
<protein>
    <recommendedName>
        <fullName evidence="1">Type III pantothenate kinase</fullName>
        <ecNumber evidence="1">2.7.1.33</ecNumber>
    </recommendedName>
    <alternativeName>
        <fullName evidence="1">PanK-III</fullName>
    </alternativeName>
    <alternativeName>
        <fullName evidence="1">Pantothenic acid kinase</fullName>
    </alternativeName>
</protein>
<dbReference type="EC" id="2.7.1.33" evidence="1"/>
<dbReference type="EMBL" id="CP000555">
    <property type="protein sequence ID" value="ABM96344.1"/>
    <property type="molecule type" value="Genomic_DNA"/>
</dbReference>
<dbReference type="RefSeq" id="WP_011830965.1">
    <property type="nucleotide sequence ID" value="NC_008825.1"/>
</dbReference>
<dbReference type="SMR" id="A2SLA5"/>
<dbReference type="STRING" id="420662.Mpe_A3391"/>
<dbReference type="KEGG" id="mpt:Mpe_A3391"/>
<dbReference type="eggNOG" id="COG1521">
    <property type="taxonomic scope" value="Bacteria"/>
</dbReference>
<dbReference type="HOGENOM" id="CLU_066627_0_0_4"/>
<dbReference type="UniPathway" id="UPA00241">
    <property type="reaction ID" value="UER00352"/>
</dbReference>
<dbReference type="Proteomes" id="UP000000366">
    <property type="component" value="Chromosome"/>
</dbReference>
<dbReference type="GO" id="GO:0005737">
    <property type="term" value="C:cytoplasm"/>
    <property type="evidence" value="ECO:0007669"/>
    <property type="project" value="UniProtKB-SubCell"/>
</dbReference>
<dbReference type="GO" id="GO:0005524">
    <property type="term" value="F:ATP binding"/>
    <property type="evidence" value="ECO:0007669"/>
    <property type="project" value="UniProtKB-UniRule"/>
</dbReference>
<dbReference type="GO" id="GO:0004594">
    <property type="term" value="F:pantothenate kinase activity"/>
    <property type="evidence" value="ECO:0007669"/>
    <property type="project" value="UniProtKB-UniRule"/>
</dbReference>
<dbReference type="GO" id="GO:0015937">
    <property type="term" value="P:coenzyme A biosynthetic process"/>
    <property type="evidence" value="ECO:0007669"/>
    <property type="project" value="UniProtKB-UniRule"/>
</dbReference>
<dbReference type="CDD" id="cd24015">
    <property type="entry name" value="ASKHA_NBD_PanK-III"/>
    <property type="match status" value="1"/>
</dbReference>
<dbReference type="Gene3D" id="3.30.420.40">
    <property type="match status" value="2"/>
</dbReference>
<dbReference type="HAMAP" id="MF_01274">
    <property type="entry name" value="Pantothen_kinase_3"/>
    <property type="match status" value="1"/>
</dbReference>
<dbReference type="InterPro" id="IPR043129">
    <property type="entry name" value="ATPase_NBD"/>
</dbReference>
<dbReference type="InterPro" id="IPR004619">
    <property type="entry name" value="Type_III_PanK"/>
</dbReference>
<dbReference type="NCBIfam" id="TIGR00671">
    <property type="entry name" value="baf"/>
    <property type="match status" value="1"/>
</dbReference>
<dbReference type="PANTHER" id="PTHR34265">
    <property type="entry name" value="TYPE III PANTOTHENATE KINASE"/>
    <property type="match status" value="1"/>
</dbReference>
<dbReference type="PANTHER" id="PTHR34265:SF1">
    <property type="entry name" value="TYPE III PANTOTHENATE KINASE"/>
    <property type="match status" value="1"/>
</dbReference>
<dbReference type="Pfam" id="PF03309">
    <property type="entry name" value="Pan_kinase"/>
    <property type="match status" value="1"/>
</dbReference>
<dbReference type="SUPFAM" id="SSF53067">
    <property type="entry name" value="Actin-like ATPase domain"/>
    <property type="match status" value="2"/>
</dbReference>